<proteinExistence type="inferred from homology"/>
<organism>
    <name type="scientific">Dechloromonas aromatica (strain RCB)</name>
    <dbReference type="NCBI Taxonomy" id="159087"/>
    <lineage>
        <taxon>Bacteria</taxon>
        <taxon>Pseudomonadati</taxon>
        <taxon>Pseudomonadota</taxon>
        <taxon>Betaproteobacteria</taxon>
        <taxon>Rhodocyclales</taxon>
        <taxon>Azonexaceae</taxon>
        <taxon>Dechloromonas</taxon>
    </lineage>
</organism>
<accession>Q47HG8</accession>
<feature type="chain" id="PRO_0000250900" description="NADH-quinone oxidoreductase subunit I">
    <location>
        <begin position="1"/>
        <end position="162"/>
    </location>
</feature>
<feature type="domain" description="4Fe-4S ferredoxin-type 1" evidence="1">
    <location>
        <begin position="53"/>
        <end position="83"/>
    </location>
</feature>
<feature type="domain" description="4Fe-4S ferredoxin-type 2" evidence="1">
    <location>
        <begin position="93"/>
        <end position="122"/>
    </location>
</feature>
<feature type="binding site" evidence="1">
    <location>
        <position position="63"/>
    </location>
    <ligand>
        <name>[4Fe-4S] cluster</name>
        <dbReference type="ChEBI" id="CHEBI:49883"/>
        <label>1</label>
    </ligand>
</feature>
<feature type="binding site" evidence="1">
    <location>
        <position position="66"/>
    </location>
    <ligand>
        <name>[4Fe-4S] cluster</name>
        <dbReference type="ChEBI" id="CHEBI:49883"/>
        <label>1</label>
    </ligand>
</feature>
<feature type="binding site" evidence="1">
    <location>
        <position position="69"/>
    </location>
    <ligand>
        <name>[4Fe-4S] cluster</name>
        <dbReference type="ChEBI" id="CHEBI:49883"/>
        <label>1</label>
    </ligand>
</feature>
<feature type="binding site" evidence="1">
    <location>
        <position position="73"/>
    </location>
    <ligand>
        <name>[4Fe-4S] cluster</name>
        <dbReference type="ChEBI" id="CHEBI:49883"/>
        <label>2</label>
    </ligand>
</feature>
<feature type="binding site" evidence="1">
    <location>
        <position position="102"/>
    </location>
    <ligand>
        <name>[4Fe-4S] cluster</name>
        <dbReference type="ChEBI" id="CHEBI:49883"/>
        <label>2</label>
    </ligand>
</feature>
<feature type="binding site" evidence="1">
    <location>
        <position position="105"/>
    </location>
    <ligand>
        <name>[4Fe-4S] cluster</name>
        <dbReference type="ChEBI" id="CHEBI:49883"/>
        <label>2</label>
    </ligand>
</feature>
<feature type="binding site" evidence="1">
    <location>
        <position position="108"/>
    </location>
    <ligand>
        <name>[4Fe-4S] cluster</name>
        <dbReference type="ChEBI" id="CHEBI:49883"/>
        <label>2</label>
    </ligand>
</feature>
<feature type="binding site" evidence="1">
    <location>
        <position position="112"/>
    </location>
    <ligand>
        <name>[4Fe-4S] cluster</name>
        <dbReference type="ChEBI" id="CHEBI:49883"/>
        <label>1</label>
    </ligand>
</feature>
<gene>
    <name evidence="1" type="primary">nuoI</name>
    <name type="ordered locus">Daro_0957</name>
</gene>
<reference key="1">
    <citation type="journal article" date="2009" name="BMC Genomics">
        <title>Metabolic analysis of the soil microbe Dechloromonas aromatica str. RCB: indications of a surprisingly complex life-style and cryptic anaerobic pathways for aromatic degradation.</title>
        <authorList>
            <person name="Salinero K.K."/>
            <person name="Keller K."/>
            <person name="Feil W.S."/>
            <person name="Feil H."/>
            <person name="Trong S."/>
            <person name="Di Bartolo G."/>
            <person name="Lapidus A."/>
        </authorList>
    </citation>
    <scope>NUCLEOTIDE SEQUENCE [LARGE SCALE GENOMIC DNA]</scope>
    <source>
        <strain>RCB</strain>
    </source>
</reference>
<dbReference type="EC" id="7.1.1.-" evidence="1"/>
<dbReference type="EMBL" id="CP000089">
    <property type="protein sequence ID" value="AAZ45713.1"/>
    <property type="molecule type" value="Genomic_DNA"/>
</dbReference>
<dbReference type="SMR" id="Q47HG8"/>
<dbReference type="STRING" id="159087.Daro_0957"/>
<dbReference type="KEGG" id="dar:Daro_0957"/>
<dbReference type="eggNOG" id="COG1143">
    <property type="taxonomic scope" value="Bacteria"/>
</dbReference>
<dbReference type="HOGENOM" id="CLU_067218_5_1_4"/>
<dbReference type="OrthoDB" id="9808559at2"/>
<dbReference type="GO" id="GO:0005886">
    <property type="term" value="C:plasma membrane"/>
    <property type="evidence" value="ECO:0007669"/>
    <property type="project" value="UniProtKB-SubCell"/>
</dbReference>
<dbReference type="GO" id="GO:0051539">
    <property type="term" value="F:4 iron, 4 sulfur cluster binding"/>
    <property type="evidence" value="ECO:0007669"/>
    <property type="project" value="UniProtKB-KW"/>
</dbReference>
<dbReference type="GO" id="GO:0005506">
    <property type="term" value="F:iron ion binding"/>
    <property type="evidence" value="ECO:0007669"/>
    <property type="project" value="UniProtKB-UniRule"/>
</dbReference>
<dbReference type="GO" id="GO:0050136">
    <property type="term" value="F:NADH:ubiquinone reductase (non-electrogenic) activity"/>
    <property type="evidence" value="ECO:0007669"/>
    <property type="project" value="UniProtKB-UniRule"/>
</dbReference>
<dbReference type="GO" id="GO:0048038">
    <property type="term" value="F:quinone binding"/>
    <property type="evidence" value="ECO:0007669"/>
    <property type="project" value="UniProtKB-KW"/>
</dbReference>
<dbReference type="GO" id="GO:0009060">
    <property type="term" value="P:aerobic respiration"/>
    <property type="evidence" value="ECO:0007669"/>
    <property type="project" value="TreeGrafter"/>
</dbReference>
<dbReference type="FunFam" id="3.30.70.3270:FF:000003">
    <property type="entry name" value="NADH-quinone oxidoreductase subunit I"/>
    <property type="match status" value="1"/>
</dbReference>
<dbReference type="Gene3D" id="3.30.70.3270">
    <property type="match status" value="1"/>
</dbReference>
<dbReference type="HAMAP" id="MF_01351">
    <property type="entry name" value="NDH1_NuoI"/>
    <property type="match status" value="1"/>
</dbReference>
<dbReference type="InterPro" id="IPR017896">
    <property type="entry name" value="4Fe4S_Fe-S-bd"/>
</dbReference>
<dbReference type="InterPro" id="IPR017900">
    <property type="entry name" value="4Fe4S_Fe_S_CS"/>
</dbReference>
<dbReference type="InterPro" id="IPR010226">
    <property type="entry name" value="NADH_quinone_OxRdtase_chainI"/>
</dbReference>
<dbReference type="NCBIfam" id="TIGR01971">
    <property type="entry name" value="NuoI"/>
    <property type="match status" value="1"/>
</dbReference>
<dbReference type="NCBIfam" id="NF004538">
    <property type="entry name" value="PRK05888.1-4"/>
    <property type="match status" value="1"/>
</dbReference>
<dbReference type="NCBIfam" id="NF004539">
    <property type="entry name" value="PRK05888.1-5"/>
    <property type="match status" value="1"/>
</dbReference>
<dbReference type="PANTHER" id="PTHR10849:SF20">
    <property type="entry name" value="NADH DEHYDROGENASE [UBIQUINONE] IRON-SULFUR PROTEIN 8, MITOCHONDRIAL"/>
    <property type="match status" value="1"/>
</dbReference>
<dbReference type="PANTHER" id="PTHR10849">
    <property type="entry name" value="NADH DEHYDROGENASE UBIQUINONE IRON-SULFUR PROTEIN 8, MITOCHONDRIAL"/>
    <property type="match status" value="1"/>
</dbReference>
<dbReference type="Pfam" id="PF12838">
    <property type="entry name" value="Fer4_7"/>
    <property type="match status" value="1"/>
</dbReference>
<dbReference type="SUPFAM" id="SSF54862">
    <property type="entry name" value="4Fe-4S ferredoxins"/>
    <property type="match status" value="1"/>
</dbReference>
<dbReference type="PROSITE" id="PS00198">
    <property type="entry name" value="4FE4S_FER_1"/>
    <property type="match status" value="2"/>
</dbReference>
<dbReference type="PROSITE" id="PS51379">
    <property type="entry name" value="4FE4S_FER_2"/>
    <property type="match status" value="2"/>
</dbReference>
<sequence length="162" mass="18797">MGSMKEIFNSLFLKELLKGMSVTGKYFFARKITVQYPEEKTPQSFRFRGLHALRRYPNGEERCIACKLCEAICPALAITIEAEPRDDGSRRTTRYDIDLTKCIFCGFCEEACPVDAVVETRIFEYHGEKRGDLYYTKQMLLANGDRYEDQIAKDRELDASYR</sequence>
<comment type="function">
    <text evidence="1">NDH-1 shuttles electrons from NADH, via FMN and iron-sulfur (Fe-S) centers, to quinones in the respiratory chain. The immediate electron acceptor for the enzyme in this species is believed to be ubiquinone. Couples the redox reaction to proton translocation (for every two electrons transferred, four hydrogen ions are translocated across the cytoplasmic membrane), and thus conserves the redox energy in a proton gradient.</text>
</comment>
<comment type="catalytic activity">
    <reaction evidence="1">
        <text>a quinone + NADH + 5 H(+)(in) = a quinol + NAD(+) + 4 H(+)(out)</text>
        <dbReference type="Rhea" id="RHEA:57888"/>
        <dbReference type="ChEBI" id="CHEBI:15378"/>
        <dbReference type="ChEBI" id="CHEBI:24646"/>
        <dbReference type="ChEBI" id="CHEBI:57540"/>
        <dbReference type="ChEBI" id="CHEBI:57945"/>
        <dbReference type="ChEBI" id="CHEBI:132124"/>
    </reaction>
</comment>
<comment type="cofactor">
    <cofactor evidence="1">
        <name>[4Fe-4S] cluster</name>
        <dbReference type="ChEBI" id="CHEBI:49883"/>
    </cofactor>
    <text evidence="1">Binds 2 [4Fe-4S] clusters per subunit.</text>
</comment>
<comment type="subunit">
    <text evidence="1">NDH-1 is composed of 14 different subunits. Subunits NuoA, H, J, K, L, M, N constitute the membrane sector of the complex.</text>
</comment>
<comment type="subcellular location">
    <subcellularLocation>
        <location evidence="1">Cell inner membrane</location>
        <topology evidence="1">Peripheral membrane protein</topology>
    </subcellularLocation>
</comment>
<comment type="similarity">
    <text evidence="1">Belongs to the complex I 23 kDa subunit family.</text>
</comment>
<evidence type="ECO:0000255" key="1">
    <source>
        <dbReference type="HAMAP-Rule" id="MF_01351"/>
    </source>
</evidence>
<name>NUOI_DECAR</name>
<protein>
    <recommendedName>
        <fullName evidence="1">NADH-quinone oxidoreductase subunit I</fullName>
        <ecNumber evidence="1">7.1.1.-</ecNumber>
    </recommendedName>
    <alternativeName>
        <fullName evidence="1">NADH dehydrogenase I subunit I</fullName>
    </alternativeName>
    <alternativeName>
        <fullName evidence="1">NDH-1 subunit I</fullName>
    </alternativeName>
</protein>
<keyword id="KW-0004">4Fe-4S</keyword>
<keyword id="KW-0997">Cell inner membrane</keyword>
<keyword id="KW-1003">Cell membrane</keyword>
<keyword id="KW-0408">Iron</keyword>
<keyword id="KW-0411">Iron-sulfur</keyword>
<keyword id="KW-0472">Membrane</keyword>
<keyword id="KW-0479">Metal-binding</keyword>
<keyword id="KW-0520">NAD</keyword>
<keyword id="KW-0874">Quinone</keyword>
<keyword id="KW-0677">Repeat</keyword>
<keyword id="KW-1278">Translocase</keyword>
<keyword id="KW-0830">Ubiquinone</keyword>